<organismHost>
    <name type="scientific">Homo sapiens</name>
    <name type="common">Human</name>
    <dbReference type="NCBI Taxonomy" id="9606"/>
</organismHost>
<organism>
    <name type="scientific">Influenza B virus (strain B/Ann Arbor/1/1966 [cold-adapted])</name>
    <dbReference type="NCBI Taxonomy" id="11522"/>
    <lineage>
        <taxon>Viruses</taxon>
        <taxon>Riboviria</taxon>
        <taxon>Orthornavirae</taxon>
        <taxon>Negarnaviricota</taxon>
        <taxon>Polyploviricotina</taxon>
        <taxon>Insthoviricetes</taxon>
        <taxon>Articulavirales</taxon>
        <taxon>Orthomyxoviridae</taxon>
        <taxon>Betainfluenzavirus</taxon>
        <taxon>Betainfluenzavirus influenzae</taxon>
        <taxon>Influenza B virus</taxon>
    </lineage>
</organism>
<reference key="1">
    <citation type="journal article" date="1988" name="Virology">
        <title>Sequence comparison of wild-type and cold-adapted B/Ann Arbor/1/66 influenza virus genes.</title>
        <authorList>
            <person name="Deborde D.C."/>
            <person name="Donabedian A.M."/>
            <person name="Herlocher M.L."/>
            <person name="Naeve C.W."/>
            <person name="Maassab H.F."/>
        </authorList>
    </citation>
    <scope>NUCLEOTIDE SEQUENCE [GENOMIC RNA]</scope>
</reference>
<proteinExistence type="evidence at protein level"/>
<evidence type="ECO:0000255" key="1">
    <source>
        <dbReference type="HAMAP-Rule" id="MF_04068"/>
    </source>
</evidence>
<name>M1_INBAC</name>
<keyword id="KW-0002">3D-structure</keyword>
<keyword id="KW-1048">Host nucleus</keyword>
<keyword id="KW-0472">Membrane</keyword>
<keyword id="KW-0694">RNA-binding</keyword>
<keyword id="KW-0468">Viral matrix protein</keyword>
<keyword id="KW-0946">Virion</keyword>
<dbReference type="EMBL" id="M20175">
    <property type="protein sequence ID" value="AAA66414.1"/>
    <property type="molecule type" value="Genomic_RNA"/>
</dbReference>
<dbReference type="PIR" id="A30064">
    <property type="entry name" value="MFIVBC"/>
</dbReference>
<dbReference type="PDB" id="7S8R">
    <property type="method" value="X-ray"/>
    <property type="resolution" value="2.95 A"/>
    <property type="chains" value="C/F=41-49"/>
</dbReference>
<dbReference type="PDBsum" id="7S8R"/>
<dbReference type="SMR" id="P13879"/>
<dbReference type="GO" id="GO:0042025">
    <property type="term" value="C:host cell nucleus"/>
    <property type="evidence" value="ECO:0007669"/>
    <property type="project" value="UniProtKB-SubCell"/>
</dbReference>
<dbReference type="GO" id="GO:0016020">
    <property type="term" value="C:membrane"/>
    <property type="evidence" value="ECO:0007669"/>
    <property type="project" value="UniProtKB-KW"/>
</dbReference>
<dbReference type="GO" id="GO:0055036">
    <property type="term" value="C:virion membrane"/>
    <property type="evidence" value="ECO:0007669"/>
    <property type="project" value="UniProtKB-SubCell"/>
</dbReference>
<dbReference type="GO" id="GO:0003723">
    <property type="term" value="F:RNA binding"/>
    <property type="evidence" value="ECO:0007669"/>
    <property type="project" value="UniProtKB-UniRule"/>
</dbReference>
<dbReference type="GO" id="GO:0039660">
    <property type="term" value="F:structural constituent of virion"/>
    <property type="evidence" value="ECO:0007669"/>
    <property type="project" value="UniProtKB-UniRule"/>
</dbReference>
<dbReference type="GO" id="GO:0046761">
    <property type="term" value="P:viral budding from plasma membrane"/>
    <property type="evidence" value="ECO:0007669"/>
    <property type="project" value="UniProtKB-UniRule"/>
</dbReference>
<dbReference type="Gene3D" id="1.10.10.180">
    <property type="match status" value="1"/>
</dbReference>
<dbReference type="Gene3D" id="1.20.91.10">
    <property type="match status" value="1"/>
</dbReference>
<dbReference type="HAMAP" id="MF_04068">
    <property type="entry name" value="INFV_M1"/>
    <property type="match status" value="1"/>
</dbReference>
<dbReference type="InterPro" id="IPR036039">
    <property type="entry name" value="Flu_matrix_M1"/>
</dbReference>
<dbReference type="InterPro" id="IPR013188">
    <property type="entry name" value="Flu_matrix_M1_C"/>
</dbReference>
<dbReference type="InterPro" id="IPR001561">
    <property type="entry name" value="Flu_matrix_M1_N"/>
</dbReference>
<dbReference type="InterPro" id="IPR015423">
    <property type="entry name" value="Flu_matrix_M1_N_sub1"/>
</dbReference>
<dbReference type="InterPro" id="IPR015799">
    <property type="entry name" value="Flu_matrix_M1_N_sub2"/>
</dbReference>
<dbReference type="InterPro" id="IPR037533">
    <property type="entry name" value="INFV_M1"/>
</dbReference>
<dbReference type="Pfam" id="PF00598">
    <property type="entry name" value="Flu_M1"/>
    <property type="match status" value="1"/>
</dbReference>
<dbReference type="Pfam" id="PF08289">
    <property type="entry name" value="Flu_M1_C"/>
    <property type="match status" value="1"/>
</dbReference>
<dbReference type="SMART" id="SM00759">
    <property type="entry name" value="Flu_M1_C"/>
    <property type="match status" value="1"/>
</dbReference>
<dbReference type="SUPFAM" id="SSF48145">
    <property type="entry name" value="Influenza virus matrix protein M1"/>
    <property type="match status" value="1"/>
</dbReference>
<gene>
    <name evidence="1" type="primary">M</name>
</gene>
<sequence>MSLFGDTIAYLLSLTEDGEGKAELAEKLHCWFGGKEFDLDSALEWIKNKRCLTDIQKALIGASICFLKPKDQERKRRFITEPLSGMGTTATKKKGLILAERKMRRCVSFHEAFEIAEGHESSALLYCLMVMYLNPGNYSMQVKLGTLCALCEKQASHSQRAHSRAARSSVPGVRREMQMVSAVNTAKTMNGMGKGEDVQKLAEELQSNIGVLRSLGASQKNGEGIAKDVMEVLKQSSMGNSALVKKYL</sequence>
<accession>P13879</accession>
<comment type="function">
    <text evidence="1">Plays critical roles in virus replication, from virus entry and uncoating to assembly and budding of the virus particle. M1 binding to ribonucleocapsids (RNPs) in nucleus seems to inhibit viral transcription. Interaction of viral NEP with M1-RNP is thought to promote nuclear export of the complex, which is targeted to the virion assembly site at the apical plasma membrane in polarized epithelial cells. Interactions with NA and HA may bring M1, a non-raft-associated protein, into lipid rafts. Forms a continuous shell on the inner side of the lipid bilayer in virion, where it binds the RNP. During virus entry into cell, the M2 ion channel acidifies the internal virion core, inducing M1 dissociation from the RNP. M1-free RNPs are transported to the nucleus, where viral transcription and replication can take place.</text>
</comment>
<comment type="function">
    <text evidence="1">Determines the virion's shape: spherical or filamentous. Clinical isolates of influenza are characterized by the presence of significant proportion of filamentous virions, whereas after multiple passage on eggs or cell culture, virions have only spherical morphology. Filamentous virions are thought to be important to infect neighboring cells, and spherical virions more suited to spread through aerosol between hosts organisms.</text>
</comment>
<comment type="subunit">
    <text evidence="1">Homodimer and homomultimer. Interacts with NEP. Binds ribonucleocapsid by both interacting with genomic RNA and NP protein. May interact with HA and NA. Cannot bind NP without genomic RNA.</text>
</comment>
<comment type="subcellular location">
    <subcellularLocation>
        <location evidence="1">Virion membrane</location>
        <topology evidence="1">Peripheral membrane protein</topology>
        <orientation evidence="1">Cytoplasmic side</orientation>
    </subcellularLocation>
    <subcellularLocation>
        <location evidence="1">Host nucleus</location>
    </subcellularLocation>
</comment>
<comment type="miscellaneous">
    <text>Influenza B virus genome RNA segment 7 encodes the M1 and BM2 (AC P13881) proteins. Normal translation produces the M1 protein. The M1 termination codon overlaps the BM2 initiation codon in an overlapping stop-start pentanucleotide 5'-UAAUG-3'. Termination of M1 translation triggers reinitiation on the BM2 AUG in the +2 open reading frame.</text>
</comment>
<comment type="miscellaneous">
    <text evidence="1">Most abundant protein in virion. When expressed alone can form virus-like particles in transfected cells.</text>
</comment>
<comment type="similarity">
    <text evidence="1">Belongs to the influenza viruses Matrix protein M1 family.</text>
</comment>
<feature type="chain" id="PRO_0000078870" description="Matrix protein 1">
    <location>
        <begin position="1"/>
        <end position="248"/>
    </location>
</feature>
<feature type="region of interest" description="Membrane-binding" evidence="1">
    <location>
        <begin position="1"/>
        <end position="164"/>
    </location>
</feature>
<feature type="region of interest" description="RNP-binding" evidence="1">
    <location>
        <begin position="165"/>
        <end position="248"/>
    </location>
</feature>
<feature type="short sequence motif" description="Nuclear localization signal" evidence="1">
    <location>
        <begin position="101"/>
        <end position="105"/>
    </location>
</feature>
<protein>
    <recommendedName>
        <fullName evidence="1">Matrix protein 1</fullName>
        <shortName evidence="1">M1</shortName>
    </recommendedName>
</protein>